<comment type="function">
    <text evidence="1">The main replicative DNA helicase, it participates in initiation and elongation during chromosome replication. Travels ahead of the DNA replisome, separating dsDNA into templates for DNA synthesis. A processive ATP-dependent 5'-3' DNA helicase it has DNA-dependent ATPase activity.</text>
</comment>
<comment type="function">
    <text evidence="1">The intein is an endonuclease.</text>
</comment>
<comment type="catalytic activity">
    <reaction evidence="1">
        <text>Couples ATP hydrolysis with the unwinding of duplex DNA at the replication fork by translocating in the 5'-3' direction. This creates two antiparallel DNA single strands (ssDNA). The leading ssDNA polymer is the template for DNA polymerase III holoenzyme which synthesizes a continuous strand.</text>
        <dbReference type="EC" id="5.6.2.3"/>
    </reaction>
</comment>
<comment type="catalytic activity">
    <reaction evidence="1">
        <text>ATP + H2O = ADP + phosphate + H(+)</text>
        <dbReference type="Rhea" id="RHEA:13065"/>
        <dbReference type="ChEBI" id="CHEBI:15377"/>
        <dbReference type="ChEBI" id="CHEBI:15378"/>
        <dbReference type="ChEBI" id="CHEBI:30616"/>
        <dbReference type="ChEBI" id="CHEBI:43474"/>
        <dbReference type="ChEBI" id="CHEBI:456216"/>
        <dbReference type="EC" id="5.6.2.3"/>
    </reaction>
</comment>
<comment type="subunit">
    <text evidence="1">Homohexamer.</text>
</comment>
<comment type="PTM">
    <text evidence="2">This protein undergoes a protein self splicing that involves a post-translational excision of the intervening region (intein) followed by peptide ligation.</text>
</comment>
<comment type="similarity">
    <text evidence="6">Belongs to the helicase family. DnaB subfamily.</text>
</comment>
<organism>
    <name type="scientific">Mycobacterium leprae (strain TN)</name>
    <dbReference type="NCBI Taxonomy" id="272631"/>
    <lineage>
        <taxon>Bacteria</taxon>
        <taxon>Bacillati</taxon>
        <taxon>Actinomycetota</taxon>
        <taxon>Actinomycetes</taxon>
        <taxon>Mycobacteriales</taxon>
        <taxon>Mycobacteriaceae</taxon>
        <taxon>Mycobacterium</taxon>
    </lineage>
</organism>
<evidence type="ECO:0000250" key="1">
    <source>
        <dbReference type="UniProtKB" id="P9WMR3"/>
    </source>
</evidence>
<evidence type="ECO:0000250" key="2">
    <source>
        <dbReference type="UniProtKB" id="Q55418"/>
    </source>
</evidence>
<evidence type="ECO:0000255" key="3"/>
<evidence type="ECO:0000255" key="4">
    <source>
        <dbReference type="PROSITE-ProRule" id="PRU00596"/>
    </source>
</evidence>
<evidence type="ECO:0000256" key="5">
    <source>
        <dbReference type="SAM" id="MobiDB-lite"/>
    </source>
</evidence>
<evidence type="ECO:0000305" key="6"/>
<reference key="1">
    <citation type="journal article" date="2001" name="Nature">
        <title>Massive gene decay in the leprosy bacillus.</title>
        <authorList>
            <person name="Cole S.T."/>
            <person name="Eiglmeier K."/>
            <person name="Parkhill J."/>
            <person name="James K.D."/>
            <person name="Thomson N.R."/>
            <person name="Wheeler P.R."/>
            <person name="Honore N."/>
            <person name="Garnier T."/>
            <person name="Churcher C.M."/>
            <person name="Harris D.E."/>
            <person name="Mungall K.L."/>
            <person name="Basham D."/>
            <person name="Brown D."/>
            <person name="Chillingworth T."/>
            <person name="Connor R."/>
            <person name="Davies R.M."/>
            <person name="Devlin K."/>
            <person name="Duthoy S."/>
            <person name="Feltwell T."/>
            <person name="Fraser A."/>
            <person name="Hamlin N."/>
            <person name="Holroyd S."/>
            <person name="Hornsby T."/>
            <person name="Jagels K."/>
            <person name="Lacroix C."/>
            <person name="Maclean J."/>
            <person name="Moule S."/>
            <person name="Murphy L.D."/>
            <person name="Oliver K."/>
            <person name="Quail M.A."/>
            <person name="Rajandream M.A."/>
            <person name="Rutherford K.M."/>
            <person name="Rutter S."/>
            <person name="Seeger K."/>
            <person name="Simon S."/>
            <person name="Simmonds M."/>
            <person name="Skelton J."/>
            <person name="Squares R."/>
            <person name="Squares S."/>
            <person name="Stevens K."/>
            <person name="Taylor K."/>
            <person name="Whitehead S."/>
            <person name="Woodward J.R."/>
            <person name="Barrell B.G."/>
        </authorList>
    </citation>
    <scope>NUCLEOTIDE SEQUENCE [LARGE SCALE GENOMIC DNA]</scope>
    <source>
        <strain>TN</strain>
    </source>
</reference>
<reference key="2">
    <citation type="journal article" date="1996" name="Microbiology">
        <title>Gene arrangement and organization in an approximately 76 kb fragment encompassing the oriC region of the chromosome of Mycobacterium leprae.</title>
        <authorList>
            <person name="Fsihi H."/>
            <person name="de Rossi E."/>
            <person name="Salazar L."/>
            <person name="Cantoni R."/>
            <person name="Labo M."/>
            <person name="Riccardi G."/>
            <person name="Takiff H.E."/>
            <person name="Eiglmeier K."/>
            <person name="Bergh S."/>
            <person name="Cole S.T."/>
        </authorList>
    </citation>
    <scope>NUCLEOTIDE SEQUENCE [GENOMIC DNA] OF 1-257</scope>
</reference>
<accession>P46394</accession>
<accession>O53124</accession>
<dbReference type="EC" id="5.6.2.3" evidence="1"/>
<dbReference type="EC" id="3.1.-.-" evidence="2"/>
<dbReference type="EMBL" id="AL022118">
    <property type="protein sequence ID" value="CAA17948.1"/>
    <property type="molecule type" value="Genomic_DNA"/>
</dbReference>
<dbReference type="EMBL" id="AL022118">
    <property type="protein sequence ID" value="CAA17949.1"/>
    <property type="molecule type" value="Genomic_DNA"/>
</dbReference>
<dbReference type="EMBL" id="AL583926">
    <property type="protein sequence ID" value="CAC32212.1"/>
    <property type="molecule type" value="Genomic_DNA"/>
</dbReference>
<dbReference type="EMBL" id="L39923">
    <property type="protein sequence ID" value="AAB53118.1"/>
    <property type="molecule type" value="Genomic_DNA"/>
</dbReference>
<dbReference type="PIR" id="F87244">
    <property type="entry name" value="F87244"/>
</dbReference>
<dbReference type="RefSeq" id="NP_302709.1">
    <property type="nucleotide sequence ID" value="NC_002677.1"/>
</dbReference>
<dbReference type="RefSeq" id="WP_010909028.1">
    <property type="nucleotide sequence ID" value="NC_002677.1"/>
</dbReference>
<dbReference type="SMR" id="P46394"/>
<dbReference type="STRING" id="272631.gene:17576546"/>
<dbReference type="KEGG" id="mle:ML2680"/>
<dbReference type="PATRIC" id="fig|272631.5.peg.5172"/>
<dbReference type="Leproma" id="ML2680"/>
<dbReference type="eggNOG" id="COG0305">
    <property type="taxonomic scope" value="Bacteria"/>
</dbReference>
<dbReference type="HOGENOM" id="CLU_005373_4_0_11"/>
<dbReference type="OrthoDB" id="9773982at2"/>
<dbReference type="Proteomes" id="UP000000806">
    <property type="component" value="Chromosome"/>
</dbReference>
<dbReference type="GO" id="GO:0005829">
    <property type="term" value="C:cytosol"/>
    <property type="evidence" value="ECO:0007669"/>
    <property type="project" value="TreeGrafter"/>
</dbReference>
<dbReference type="GO" id="GO:1990077">
    <property type="term" value="C:primosome complex"/>
    <property type="evidence" value="ECO:0007669"/>
    <property type="project" value="UniProtKB-KW"/>
</dbReference>
<dbReference type="GO" id="GO:0005524">
    <property type="term" value="F:ATP binding"/>
    <property type="evidence" value="ECO:0007669"/>
    <property type="project" value="UniProtKB-KW"/>
</dbReference>
<dbReference type="GO" id="GO:0016887">
    <property type="term" value="F:ATP hydrolysis activity"/>
    <property type="evidence" value="ECO:0007669"/>
    <property type="project" value="RHEA"/>
</dbReference>
<dbReference type="GO" id="GO:0003677">
    <property type="term" value="F:DNA binding"/>
    <property type="evidence" value="ECO:0007669"/>
    <property type="project" value="UniProtKB-KW"/>
</dbReference>
<dbReference type="GO" id="GO:0003678">
    <property type="term" value="F:DNA helicase activity"/>
    <property type="evidence" value="ECO:0007669"/>
    <property type="project" value="InterPro"/>
</dbReference>
<dbReference type="GO" id="GO:0006269">
    <property type="term" value="P:DNA replication, synthesis of primer"/>
    <property type="evidence" value="ECO:0007669"/>
    <property type="project" value="UniProtKB-KW"/>
</dbReference>
<dbReference type="CDD" id="cd00984">
    <property type="entry name" value="DnaB_C"/>
    <property type="match status" value="1"/>
</dbReference>
<dbReference type="FunFam" id="1.10.860.10:FF:000001">
    <property type="entry name" value="Replicative DNA helicase"/>
    <property type="match status" value="1"/>
</dbReference>
<dbReference type="FunFam" id="3.40.50.300:FF:001469">
    <property type="entry name" value="Replicative DNA helicase"/>
    <property type="match status" value="1"/>
</dbReference>
<dbReference type="Gene3D" id="1.10.860.10">
    <property type="entry name" value="DNAb Helicase, Chain A"/>
    <property type="match status" value="1"/>
</dbReference>
<dbReference type="Gene3D" id="2.170.16.10">
    <property type="entry name" value="Hedgehog/Intein (Hint) domain"/>
    <property type="match status" value="1"/>
</dbReference>
<dbReference type="Gene3D" id="3.40.50.300">
    <property type="entry name" value="P-loop containing nucleotide triphosphate hydrolases"/>
    <property type="match status" value="2"/>
</dbReference>
<dbReference type="InterPro" id="IPR036185">
    <property type="entry name" value="DNA_heli_DnaB-like_N_sf"/>
</dbReference>
<dbReference type="InterPro" id="IPR007692">
    <property type="entry name" value="DNA_helicase_DnaB"/>
</dbReference>
<dbReference type="InterPro" id="IPR007694">
    <property type="entry name" value="DNA_helicase_DnaB-like_C"/>
</dbReference>
<dbReference type="InterPro" id="IPR007693">
    <property type="entry name" value="DNA_helicase_DnaB-like_N"/>
</dbReference>
<dbReference type="InterPro" id="IPR016136">
    <property type="entry name" value="DNA_helicase_N/primase_C"/>
</dbReference>
<dbReference type="InterPro" id="IPR003587">
    <property type="entry name" value="Hint_dom_N"/>
</dbReference>
<dbReference type="InterPro" id="IPR036844">
    <property type="entry name" value="Hint_dom_sf"/>
</dbReference>
<dbReference type="InterPro" id="IPR027417">
    <property type="entry name" value="P-loop_NTPase"/>
</dbReference>
<dbReference type="NCBIfam" id="TIGR00665">
    <property type="entry name" value="DnaB"/>
    <property type="match status" value="1"/>
</dbReference>
<dbReference type="PANTHER" id="PTHR30153:SF2">
    <property type="entry name" value="REPLICATIVE DNA HELICASE"/>
    <property type="match status" value="1"/>
</dbReference>
<dbReference type="PANTHER" id="PTHR30153">
    <property type="entry name" value="REPLICATIVE DNA HELICASE DNAB"/>
    <property type="match status" value="1"/>
</dbReference>
<dbReference type="Pfam" id="PF00772">
    <property type="entry name" value="DnaB"/>
    <property type="match status" value="1"/>
</dbReference>
<dbReference type="Pfam" id="PF03796">
    <property type="entry name" value="DnaB_C"/>
    <property type="match status" value="2"/>
</dbReference>
<dbReference type="SMART" id="SM00306">
    <property type="entry name" value="HintN"/>
    <property type="match status" value="1"/>
</dbReference>
<dbReference type="SUPFAM" id="SSF51294">
    <property type="entry name" value="Hedgehog/intein (Hint) domain"/>
    <property type="match status" value="1"/>
</dbReference>
<dbReference type="SUPFAM" id="SSF48024">
    <property type="entry name" value="N-terminal domain of DnaB helicase"/>
    <property type="match status" value="1"/>
</dbReference>
<dbReference type="SUPFAM" id="SSF52540">
    <property type="entry name" value="P-loop containing nucleoside triphosphate hydrolases"/>
    <property type="match status" value="2"/>
</dbReference>
<dbReference type="PROSITE" id="PS51199">
    <property type="entry name" value="SF4_HELICASE"/>
    <property type="match status" value="2"/>
</dbReference>
<sequence length="604" mass="65876">MAVVDDLAHSGMDAVPPSEDFGRQPPQDLAAEQSVLGGMLLSKDAIADVLERLRSGDFYRPAHQNVYDAILDLYGRGEPADAVTVAAELDRRGLLRRIGGAPYLHTLISTVPTAANAGYYAGIVAEKALLRRLVEAGTRVVQYGYAGAEGADVAEVVDRAQAEIYDVAECRLSENYVPLEDLLQPTMDDLDAIASNGGISRGAPTGFTELDEVTNGLHPGQMIIVAARPGVGKALALDTPLPTPTGWTAMGDVAVGDELLAVDEAPTRVVAATEVMLGRPCYEIEFSDGTVIVADAQHQWPTSYGIRTSAQLRCGLDIIAAAGSTPRHAGRLTTAAFMAPVLCIDSVRRVRSVPVRCVEVDNAAHLYLAGRGMVPTHNSTLGLDFMRSCSIKHRLASVIFSLEMSKSEIVMRLLSAEAKIKLADMRSGRMTDDDWTRLARRMSEISEAPLYIDDSPNLTMMEIRAKARRLRQKTNLKLVVVDYLQLMTSGKRFESRQVEVSEFSRHLKLLAKELELPVVAISQLNRSPEQRTDKKPMLSDLRESGSLEQDADVVILLHRPDAFDRDDPRGGEADLILAKHRNGPTKTVTVAHQLHLSRFTNMAR</sequence>
<protein>
    <recommendedName>
        <fullName>Replicative DNA helicase DnaB</fullName>
        <ecNumber evidence="1">5.6.2.3</ecNumber>
    </recommendedName>
    <alternativeName>
        <fullName evidence="6">DNA 5'-3' helicase DnaB</fullName>
    </alternativeName>
    <component>
        <recommendedName>
            <fullName>Mle DnaB intein</fullName>
            <ecNumber evidence="2">3.1.-.-</ecNumber>
        </recommendedName>
    </component>
</protein>
<name>DNAB_MYCLE</name>
<gene>
    <name type="primary">dnaB</name>
    <name type="ordered locus">ML2680</name>
    <name type="ORF">MLCB1913.16c</name>
</gene>
<proteinExistence type="inferred from homology"/>
<keyword id="KW-0067">ATP-binding</keyword>
<keyword id="KW-0235">DNA replication</keyword>
<keyword id="KW-0238">DNA-binding</keyword>
<keyword id="KW-0347">Helicase</keyword>
<keyword id="KW-0378">Hydrolase</keyword>
<keyword id="KW-0413">Isomerase</keyword>
<keyword id="KW-0547">Nucleotide-binding</keyword>
<keyword id="KW-0639">Primosome</keyword>
<keyword id="KW-1185">Reference proteome</keyword>
<keyword id="KW-0677">Repeat</keyword>
<feature type="chain" id="PRO_0000013279" description="Replicative DNA helicase DnaB, 1st part" evidence="3">
    <location>
        <begin position="1"/>
        <end position="233"/>
    </location>
</feature>
<feature type="chain" id="PRO_0000013280" description="Mle DnaB intein" evidence="3">
    <location>
        <begin position="234"/>
        <end position="378"/>
    </location>
</feature>
<feature type="chain" id="PRO_0000013281" description="Replicative DNA helicase DnaB, 2nd part" evidence="3">
    <location>
        <begin position="379"/>
        <end position="604"/>
    </location>
</feature>
<feature type="domain" description="SF4 helicase; first part" evidence="4">
    <location>
        <begin position="196"/>
        <end position="462"/>
    </location>
</feature>
<feature type="domain" description="SF4 helicase; second part" evidence="4">
    <location>
        <begin position="341"/>
        <end position="604"/>
    </location>
</feature>
<feature type="region of interest" description="Disordered" evidence="5">
    <location>
        <begin position="1"/>
        <end position="25"/>
    </location>
</feature>
<feature type="binding site" evidence="4">
    <location>
        <begin position="227"/>
        <end position="234"/>
    </location>
    <ligand>
        <name>ATP</name>
        <dbReference type="ChEBI" id="CHEBI:30616"/>
    </ligand>
</feature>
<feature type="sequence conflict" description="In Ref. 2; AAB53118." evidence="6" ref="2">
    <original>DVAVGD</original>
    <variation>ELRPRS</variation>
    <location>
        <begin position="252"/>
        <end position="257"/>
    </location>
</feature>